<dbReference type="EC" id="2.1.1.182" evidence="1"/>
<dbReference type="EMBL" id="AE017263">
    <property type="protein sequence ID" value="AAT75361.1"/>
    <property type="molecule type" value="Genomic_DNA"/>
</dbReference>
<dbReference type="RefSeq" id="WP_011182902.1">
    <property type="nucleotide sequence ID" value="NC_006055.1"/>
</dbReference>
<dbReference type="RefSeq" id="YP_053245.1">
    <property type="nucleotide sequence ID" value="NC_006055.1"/>
</dbReference>
<dbReference type="SMR" id="Q6F2B4"/>
<dbReference type="STRING" id="265311.Mfl005"/>
<dbReference type="PaxDb" id="265311-Mfl005"/>
<dbReference type="EnsemblBacteria" id="AAT75361">
    <property type="protein sequence ID" value="AAT75361"/>
    <property type="gene ID" value="Mfl005"/>
</dbReference>
<dbReference type="GeneID" id="2898270"/>
<dbReference type="KEGG" id="mfl:Mfl005"/>
<dbReference type="PATRIC" id="fig|265311.5.peg.5"/>
<dbReference type="eggNOG" id="COG0030">
    <property type="taxonomic scope" value="Bacteria"/>
</dbReference>
<dbReference type="HOGENOM" id="CLU_041220_0_0_14"/>
<dbReference type="OrthoDB" id="9814755at2"/>
<dbReference type="Proteomes" id="UP000006647">
    <property type="component" value="Chromosome"/>
</dbReference>
<dbReference type="GO" id="GO:0005829">
    <property type="term" value="C:cytosol"/>
    <property type="evidence" value="ECO:0007669"/>
    <property type="project" value="TreeGrafter"/>
</dbReference>
<dbReference type="GO" id="GO:0052908">
    <property type="term" value="F:16S rRNA (adenine(1518)-N(6)/adenine(1519)-N(6))-dimethyltransferase activity"/>
    <property type="evidence" value="ECO:0007669"/>
    <property type="project" value="UniProtKB-EC"/>
</dbReference>
<dbReference type="GO" id="GO:0003723">
    <property type="term" value="F:RNA binding"/>
    <property type="evidence" value="ECO:0007669"/>
    <property type="project" value="UniProtKB-KW"/>
</dbReference>
<dbReference type="CDD" id="cd02440">
    <property type="entry name" value="AdoMet_MTases"/>
    <property type="match status" value="1"/>
</dbReference>
<dbReference type="Gene3D" id="1.10.8.100">
    <property type="entry name" value="Ribosomal RNA adenine dimethylase-like, domain 2"/>
    <property type="match status" value="1"/>
</dbReference>
<dbReference type="Gene3D" id="3.40.50.150">
    <property type="entry name" value="Vaccinia Virus protein VP39"/>
    <property type="match status" value="1"/>
</dbReference>
<dbReference type="HAMAP" id="MF_00607">
    <property type="entry name" value="16SrRNA_methyltr_A"/>
    <property type="match status" value="1"/>
</dbReference>
<dbReference type="InterPro" id="IPR001737">
    <property type="entry name" value="KsgA/Erm"/>
</dbReference>
<dbReference type="InterPro" id="IPR023165">
    <property type="entry name" value="rRNA_Ade_diMease-like_C"/>
</dbReference>
<dbReference type="InterPro" id="IPR020596">
    <property type="entry name" value="rRNA_Ade_Mease_Trfase_CS"/>
</dbReference>
<dbReference type="InterPro" id="IPR020598">
    <property type="entry name" value="rRNA_Ade_methylase_Trfase_N"/>
</dbReference>
<dbReference type="InterPro" id="IPR011530">
    <property type="entry name" value="rRNA_adenine_dimethylase"/>
</dbReference>
<dbReference type="InterPro" id="IPR029063">
    <property type="entry name" value="SAM-dependent_MTases_sf"/>
</dbReference>
<dbReference type="NCBIfam" id="TIGR00755">
    <property type="entry name" value="ksgA"/>
    <property type="match status" value="1"/>
</dbReference>
<dbReference type="PANTHER" id="PTHR11727">
    <property type="entry name" value="DIMETHYLADENOSINE TRANSFERASE"/>
    <property type="match status" value="1"/>
</dbReference>
<dbReference type="PANTHER" id="PTHR11727:SF7">
    <property type="entry name" value="DIMETHYLADENOSINE TRANSFERASE-RELATED"/>
    <property type="match status" value="1"/>
</dbReference>
<dbReference type="Pfam" id="PF00398">
    <property type="entry name" value="RrnaAD"/>
    <property type="match status" value="1"/>
</dbReference>
<dbReference type="SMART" id="SM00650">
    <property type="entry name" value="rADc"/>
    <property type="match status" value="1"/>
</dbReference>
<dbReference type="SUPFAM" id="SSF53335">
    <property type="entry name" value="S-adenosyl-L-methionine-dependent methyltransferases"/>
    <property type="match status" value="1"/>
</dbReference>
<dbReference type="PROSITE" id="PS01131">
    <property type="entry name" value="RRNA_A_DIMETH"/>
    <property type="match status" value="1"/>
</dbReference>
<dbReference type="PROSITE" id="PS51689">
    <property type="entry name" value="SAM_RNA_A_N6_MT"/>
    <property type="match status" value="1"/>
</dbReference>
<reference key="1">
    <citation type="submission" date="2004-06" db="EMBL/GenBank/DDBJ databases">
        <authorList>
            <person name="Birren B.W."/>
            <person name="Stange-Thomann N."/>
            <person name="Hafez N."/>
            <person name="DeCaprio D."/>
            <person name="Fisher S."/>
            <person name="Butler J."/>
            <person name="Elkins T."/>
            <person name="Kodira C.D."/>
            <person name="Major J."/>
            <person name="Wang S."/>
            <person name="Nicol R."/>
            <person name="Nusbaum C."/>
        </authorList>
    </citation>
    <scope>NUCLEOTIDE SEQUENCE [LARGE SCALE GENOMIC DNA]</scope>
    <source>
        <strain>ATCC 33453 / NBRC 100688 / NCTC 11704 / L1</strain>
    </source>
</reference>
<keyword id="KW-0963">Cytoplasm</keyword>
<keyword id="KW-0489">Methyltransferase</keyword>
<keyword id="KW-1185">Reference proteome</keyword>
<keyword id="KW-0694">RNA-binding</keyword>
<keyword id="KW-0698">rRNA processing</keyword>
<keyword id="KW-0949">S-adenosyl-L-methionine</keyword>
<keyword id="KW-0808">Transferase</keyword>
<protein>
    <recommendedName>
        <fullName evidence="1">Ribosomal RNA small subunit methyltransferase A</fullName>
        <ecNumber evidence="1">2.1.1.182</ecNumber>
    </recommendedName>
    <alternativeName>
        <fullName evidence="1">16S rRNA (adenine(1518)-N(6)/adenine(1519)-N(6))-dimethyltransferase</fullName>
    </alternativeName>
    <alternativeName>
        <fullName evidence="1">16S rRNA dimethyladenosine transferase</fullName>
    </alternativeName>
    <alternativeName>
        <fullName evidence="1">16S rRNA dimethylase</fullName>
    </alternativeName>
    <alternativeName>
        <fullName evidence="1">S-adenosylmethionine-6-N', N'-adenosyl(rRNA) dimethyltransferase</fullName>
    </alternativeName>
</protein>
<evidence type="ECO:0000255" key="1">
    <source>
        <dbReference type="HAMAP-Rule" id="MF_00607"/>
    </source>
</evidence>
<comment type="function">
    <text evidence="1">Specifically dimethylates two adjacent adenosines (A1518 and A1519) in the loop of a conserved hairpin near the 3'-end of 16S rRNA in the 30S particle. May play a critical role in biogenesis of 30S subunits.</text>
</comment>
<comment type="catalytic activity">
    <reaction evidence="1">
        <text>adenosine(1518)/adenosine(1519) in 16S rRNA + 4 S-adenosyl-L-methionine = N(6)-dimethyladenosine(1518)/N(6)-dimethyladenosine(1519) in 16S rRNA + 4 S-adenosyl-L-homocysteine + 4 H(+)</text>
        <dbReference type="Rhea" id="RHEA:19609"/>
        <dbReference type="Rhea" id="RHEA-COMP:10232"/>
        <dbReference type="Rhea" id="RHEA-COMP:10233"/>
        <dbReference type="ChEBI" id="CHEBI:15378"/>
        <dbReference type="ChEBI" id="CHEBI:57856"/>
        <dbReference type="ChEBI" id="CHEBI:59789"/>
        <dbReference type="ChEBI" id="CHEBI:74411"/>
        <dbReference type="ChEBI" id="CHEBI:74493"/>
        <dbReference type="EC" id="2.1.1.182"/>
    </reaction>
</comment>
<comment type="subcellular location">
    <subcellularLocation>
        <location evidence="1">Cytoplasm</location>
    </subcellularLocation>
</comment>
<comment type="similarity">
    <text evidence="1">Belongs to the class I-like SAM-binding methyltransferase superfamily. rRNA adenine N(6)-methyltransferase family. RsmA subfamily.</text>
</comment>
<organism>
    <name type="scientific">Mesoplasma florum (strain ATCC 33453 / NBRC 100688 / NCTC 11704 / L1)</name>
    <name type="common">Acholeplasma florum</name>
    <dbReference type="NCBI Taxonomy" id="265311"/>
    <lineage>
        <taxon>Bacteria</taxon>
        <taxon>Bacillati</taxon>
        <taxon>Mycoplasmatota</taxon>
        <taxon>Mollicutes</taxon>
        <taxon>Entomoplasmatales</taxon>
        <taxon>Entomoplasmataceae</taxon>
        <taxon>Mesoplasma</taxon>
    </lineage>
</organism>
<gene>
    <name evidence="1" type="primary">rsmA</name>
    <name evidence="1" type="synonym">ksgA</name>
    <name type="ordered locus">Mfl005</name>
</gene>
<sequence>MKVEAKKKFGQNFISDQNLINKIVSILGNDKDQLIIEIGPGTGALTKLLAQKYNKVVAIEIDTDMEPILKKEITNDNFELFLSDVLLVDFEKLIKEKRQHENQKVSIISNMPYYITSEILFRTLNVSDKLTKAVFMMQKEVAIRVCSYKGENNYNNLSVACEFYADKKYEFTVPKHMFYPVPKVDSAIISLTFNNKYTEQIKDKDKFLTFLRKIFNNRRKTILNNLSNVTNDKTKANEILDNLNIDKSLRPEVVGLEDFIRIYNKTR</sequence>
<name>RSMA_MESFL</name>
<proteinExistence type="inferred from homology"/>
<accession>Q6F2B4</accession>
<feature type="chain" id="PRO_0000101555" description="Ribosomal RNA small subunit methyltransferase A">
    <location>
        <begin position="1"/>
        <end position="267"/>
    </location>
</feature>
<feature type="binding site" evidence="1">
    <location>
        <position position="12"/>
    </location>
    <ligand>
        <name>S-adenosyl-L-methionine</name>
        <dbReference type="ChEBI" id="CHEBI:59789"/>
    </ligand>
</feature>
<feature type="binding site" evidence="1">
    <location>
        <position position="14"/>
    </location>
    <ligand>
        <name>S-adenosyl-L-methionine</name>
        <dbReference type="ChEBI" id="CHEBI:59789"/>
    </ligand>
</feature>
<feature type="binding site" evidence="1">
    <location>
        <position position="39"/>
    </location>
    <ligand>
        <name>S-adenosyl-L-methionine</name>
        <dbReference type="ChEBI" id="CHEBI:59789"/>
    </ligand>
</feature>
<feature type="binding site" evidence="1">
    <location>
        <position position="60"/>
    </location>
    <ligand>
        <name>S-adenosyl-L-methionine</name>
        <dbReference type="ChEBI" id="CHEBI:59789"/>
    </ligand>
</feature>
<feature type="binding site" evidence="1">
    <location>
        <position position="84"/>
    </location>
    <ligand>
        <name>S-adenosyl-L-methionine</name>
        <dbReference type="ChEBI" id="CHEBI:59789"/>
    </ligand>
</feature>
<feature type="binding site" evidence="1">
    <location>
        <position position="110"/>
    </location>
    <ligand>
        <name>S-adenosyl-L-methionine</name>
        <dbReference type="ChEBI" id="CHEBI:59789"/>
    </ligand>
</feature>